<protein>
    <recommendedName>
        <fullName evidence="1">GMP synthase [glutamine-hydrolyzing]</fullName>
        <ecNumber evidence="1">6.3.5.2</ecNumber>
    </recommendedName>
    <alternativeName>
        <fullName evidence="1">GMP synthetase</fullName>
    </alternativeName>
    <alternativeName>
        <fullName evidence="1">Glutamine amidotransferase</fullName>
    </alternativeName>
</protein>
<evidence type="ECO:0000255" key="1">
    <source>
        <dbReference type="HAMAP-Rule" id="MF_00344"/>
    </source>
</evidence>
<evidence type="ECO:0000305" key="2"/>
<proteinExistence type="inferred from homology"/>
<dbReference type="EC" id="6.3.5.2" evidence="1"/>
<dbReference type="EMBL" id="AE013598">
    <property type="protein sequence ID" value="AAW75449.1"/>
    <property type="status" value="ALT_INIT"/>
    <property type="molecule type" value="Genomic_DNA"/>
</dbReference>
<dbReference type="SMR" id="Q5H0S2"/>
<dbReference type="STRING" id="291331.XOO2195"/>
<dbReference type="MEROPS" id="C26.957"/>
<dbReference type="KEGG" id="xoo:XOO2195"/>
<dbReference type="PATRIC" id="fig|291331.8.peg.2427"/>
<dbReference type="HOGENOM" id="CLU_014340_0_5_6"/>
<dbReference type="UniPathway" id="UPA00189">
    <property type="reaction ID" value="UER00296"/>
</dbReference>
<dbReference type="Proteomes" id="UP000006735">
    <property type="component" value="Chromosome"/>
</dbReference>
<dbReference type="GO" id="GO:0005829">
    <property type="term" value="C:cytosol"/>
    <property type="evidence" value="ECO:0007669"/>
    <property type="project" value="TreeGrafter"/>
</dbReference>
<dbReference type="GO" id="GO:0005524">
    <property type="term" value="F:ATP binding"/>
    <property type="evidence" value="ECO:0007669"/>
    <property type="project" value="UniProtKB-UniRule"/>
</dbReference>
<dbReference type="GO" id="GO:0003921">
    <property type="term" value="F:GMP synthase activity"/>
    <property type="evidence" value="ECO:0007669"/>
    <property type="project" value="InterPro"/>
</dbReference>
<dbReference type="CDD" id="cd01742">
    <property type="entry name" value="GATase1_GMP_Synthase"/>
    <property type="match status" value="1"/>
</dbReference>
<dbReference type="CDD" id="cd01997">
    <property type="entry name" value="GMP_synthase_C"/>
    <property type="match status" value="1"/>
</dbReference>
<dbReference type="FunFam" id="3.30.300.10:FF:000002">
    <property type="entry name" value="GMP synthase [glutamine-hydrolyzing]"/>
    <property type="match status" value="1"/>
</dbReference>
<dbReference type="FunFam" id="3.40.50.620:FF:000001">
    <property type="entry name" value="GMP synthase [glutamine-hydrolyzing]"/>
    <property type="match status" value="1"/>
</dbReference>
<dbReference type="FunFam" id="3.40.50.880:FF:000001">
    <property type="entry name" value="GMP synthase [glutamine-hydrolyzing]"/>
    <property type="match status" value="1"/>
</dbReference>
<dbReference type="Gene3D" id="3.30.300.10">
    <property type="match status" value="1"/>
</dbReference>
<dbReference type="Gene3D" id="3.40.50.880">
    <property type="match status" value="1"/>
</dbReference>
<dbReference type="Gene3D" id="3.40.50.620">
    <property type="entry name" value="HUPs"/>
    <property type="match status" value="1"/>
</dbReference>
<dbReference type="HAMAP" id="MF_00344">
    <property type="entry name" value="GMP_synthase"/>
    <property type="match status" value="1"/>
</dbReference>
<dbReference type="InterPro" id="IPR029062">
    <property type="entry name" value="Class_I_gatase-like"/>
</dbReference>
<dbReference type="InterPro" id="IPR017926">
    <property type="entry name" value="GATASE"/>
</dbReference>
<dbReference type="InterPro" id="IPR001674">
    <property type="entry name" value="GMP_synth_C"/>
</dbReference>
<dbReference type="InterPro" id="IPR004739">
    <property type="entry name" value="GMP_synth_GATase"/>
</dbReference>
<dbReference type="InterPro" id="IPR022955">
    <property type="entry name" value="GMP_synthase"/>
</dbReference>
<dbReference type="InterPro" id="IPR025777">
    <property type="entry name" value="GMPS_ATP_PPase_dom"/>
</dbReference>
<dbReference type="InterPro" id="IPR022310">
    <property type="entry name" value="NAD/GMP_synthase"/>
</dbReference>
<dbReference type="InterPro" id="IPR014729">
    <property type="entry name" value="Rossmann-like_a/b/a_fold"/>
</dbReference>
<dbReference type="NCBIfam" id="TIGR00884">
    <property type="entry name" value="guaA_Cterm"/>
    <property type="match status" value="1"/>
</dbReference>
<dbReference type="NCBIfam" id="TIGR00888">
    <property type="entry name" value="guaA_Nterm"/>
    <property type="match status" value="1"/>
</dbReference>
<dbReference type="NCBIfam" id="NF000848">
    <property type="entry name" value="PRK00074.1"/>
    <property type="match status" value="1"/>
</dbReference>
<dbReference type="PANTHER" id="PTHR11922:SF2">
    <property type="entry name" value="GMP SYNTHASE [GLUTAMINE-HYDROLYZING]"/>
    <property type="match status" value="1"/>
</dbReference>
<dbReference type="PANTHER" id="PTHR11922">
    <property type="entry name" value="GMP SYNTHASE-RELATED"/>
    <property type="match status" value="1"/>
</dbReference>
<dbReference type="Pfam" id="PF00117">
    <property type="entry name" value="GATase"/>
    <property type="match status" value="1"/>
</dbReference>
<dbReference type="Pfam" id="PF00958">
    <property type="entry name" value="GMP_synt_C"/>
    <property type="match status" value="1"/>
</dbReference>
<dbReference type="Pfam" id="PF02540">
    <property type="entry name" value="NAD_synthase"/>
    <property type="match status" value="1"/>
</dbReference>
<dbReference type="PRINTS" id="PR00097">
    <property type="entry name" value="ANTSNTHASEII"/>
</dbReference>
<dbReference type="PRINTS" id="PR00099">
    <property type="entry name" value="CPSGATASE"/>
</dbReference>
<dbReference type="PRINTS" id="PR00096">
    <property type="entry name" value="GATASE"/>
</dbReference>
<dbReference type="SUPFAM" id="SSF52402">
    <property type="entry name" value="Adenine nucleotide alpha hydrolases-like"/>
    <property type="match status" value="1"/>
</dbReference>
<dbReference type="SUPFAM" id="SSF52317">
    <property type="entry name" value="Class I glutamine amidotransferase-like"/>
    <property type="match status" value="1"/>
</dbReference>
<dbReference type="SUPFAM" id="SSF54810">
    <property type="entry name" value="GMP synthetase C-terminal dimerisation domain"/>
    <property type="match status" value="1"/>
</dbReference>
<dbReference type="PROSITE" id="PS51273">
    <property type="entry name" value="GATASE_TYPE_1"/>
    <property type="match status" value="1"/>
</dbReference>
<dbReference type="PROSITE" id="PS51553">
    <property type="entry name" value="GMPS_ATP_PPASE"/>
    <property type="match status" value="1"/>
</dbReference>
<organism>
    <name type="scientific">Xanthomonas oryzae pv. oryzae (strain KACC10331 / KXO85)</name>
    <dbReference type="NCBI Taxonomy" id="291331"/>
    <lineage>
        <taxon>Bacteria</taxon>
        <taxon>Pseudomonadati</taxon>
        <taxon>Pseudomonadota</taxon>
        <taxon>Gammaproteobacteria</taxon>
        <taxon>Lysobacterales</taxon>
        <taxon>Lysobacteraceae</taxon>
        <taxon>Xanthomonas</taxon>
    </lineage>
</organism>
<keyword id="KW-0067">ATP-binding</keyword>
<keyword id="KW-0315">Glutamine amidotransferase</keyword>
<keyword id="KW-0332">GMP biosynthesis</keyword>
<keyword id="KW-0436">Ligase</keyword>
<keyword id="KW-0547">Nucleotide-binding</keyword>
<keyword id="KW-0658">Purine biosynthesis</keyword>
<keyword id="KW-1185">Reference proteome</keyword>
<feature type="chain" id="PRO_0000229489" description="GMP synthase [glutamine-hydrolyzing]">
    <location>
        <begin position="1"/>
        <end position="521"/>
    </location>
</feature>
<feature type="domain" description="Glutamine amidotransferase type-1" evidence="1">
    <location>
        <begin position="8"/>
        <end position="203"/>
    </location>
</feature>
<feature type="domain" description="GMPS ATP-PPase" evidence="1">
    <location>
        <begin position="204"/>
        <end position="396"/>
    </location>
</feature>
<feature type="active site" description="Nucleophile" evidence="1">
    <location>
        <position position="85"/>
    </location>
</feature>
<feature type="active site" evidence="1">
    <location>
        <position position="177"/>
    </location>
</feature>
<feature type="active site" evidence="1">
    <location>
        <position position="179"/>
    </location>
</feature>
<feature type="binding site" evidence="1">
    <location>
        <begin position="231"/>
        <end position="237"/>
    </location>
    <ligand>
        <name>ATP</name>
        <dbReference type="ChEBI" id="CHEBI:30616"/>
    </ligand>
</feature>
<comment type="function">
    <text evidence="1">Catalyzes the synthesis of GMP from XMP.</text>
</comment>
<comment type="catalytic activity">
    <reaction evidence="1">
        <text>XMP + L-glutamine + ATP + H2O = GMP + L-glutamate + AMP + diphosphate + 2 H(+)</text>
        <dbReference type="Rhea" id="RHEA:11680"/>
        <dbReference type="ChEBI" id="CHEBI:15377"/>
        <dbReference type="ChEBI" id="CHEBI:15378"/>
        <dbReference type="ChEBI" id="CHEBI:29985"/>
        <dbReference type="ChEBI" id="CHEBI:30616"/>
        <dbReference type="ChEBI" id="CHEBI:33019"/>
        <dbReference type="ChEBI" id="CHEBI:57464"/>
        <dbReference type="ChEBI" id="CHEBI:58115"/>
        <dbReference type="ChEBI" id="CHEBI:58359"/>
        <dbReference type="ChEBI" id="CHEBI:456215"/>
        <dbReference type="EC" id="6.3.5.2"/>
    </reaction>
</comment>
<comment type="pathway">
    <text evidence="1">Purine metabolism; GMP biosynthesis; GMP from XMP (L-Gln route): step 1/1.</text>
</comment>
<comment type="subunit">
    <text evidence="1">Homodimer.</text>
</comment>
<comment type="sequence caution" evidence="2">
    <conflict type="erroneous initiation">
        <sequence resource="EMBL-CDS" id="AAW75449"/>
    </conflict>
</comment>
<accession>Q5H0S2</accession>
<reference key="1">
    <citation type="journal article" date="2005" name="Nucleic Acids Res.">
        <title>The genome sequence of Xanthomonas oryzae pathovar oryzae KACC10331, the bacterial blight pathogen of rice.</title>
        <authorList>
            <person name="Lee B.-M."/>
            <person name="Park Y.-J."/>
            <person name="Park D.-S."/>
            <person name="Kang H.-W."/>
            <person name="Kim J.-G."/>
            <person name="Song E.-S."/>
            <person name="Park I.-C."/>
            <person name="Yoon U.-H."/>
            <person name="Hahn J.-H."/>
            <person name="Koo B.-S."/>
            <person name="Lee G.-B."/>
            <person name="Kim H."/>
            <person name="Park H.-S."/>
            <person name="Yoon K.-O."/>
            <person name="Kim J.-H."/>
            <person name="Jung C.-H."/>
            <person name="Koh N.-H."/>
            <person name="Seo J.-S."/>
            <person name="Go S.-J."/>
        </authorList>
    </citation>
    <scope>NUCLEOTIDE SEQUENCE [LARGE SCALE GENOMIC DNA]</scope>
    <source>
        <strain>KACC10331 / KXO85</strain>
    </source>
</reference>
<gene>
    <name evidence="1" type="primary">guaA</name>
    <name type="ordered locus">XOO2195</name>
</gene>
<name>GUAA_XANOR</name>
<sequence length="521" mass="57108">MTNIHTDKILILDFGAQYTQLIARRIREIGVYCEIWAWDHDPSEIAGFGAKGIILSGGPESTTLPGAPVAPQEVFDSGLPVFGICYGMQTLAAQLGGATEAADQREFGHAEVDVIAADALFAGLTDHAGAPRLNVWMSHGDHVSQVPPGFTITATTDRIPVAAMSNEDKRWYGVQFHPEVTHTLQGQTLLRRFVVDICGCQTLWTAANIIDDQIARVREQVGDDDVILGLSGGVDSSVVAALLHKAIGDKLTCVFVDTGLLRWQEGDQVMAMFAEHMGVKVIRVNAADRYFAKLEGVSDPEAKRKIIGNLFVEIFDEESNTLANAKWLAQGTIYPDVIESAGSKTGNAHVIKSHHNVGGLPQHMKLGLVEPLRELFKDEVRRLGVELGLPRTMVYRHPFPGPGLGVRILGEVKREYAELLAKADAIFIDELRKADLYDKISQAFAVFLPVKSVGVVGDARAYEWVIALRAVETIDFMTAHWAHLPYDFLGTVSNRIINELRGVSRVVYDISGKPPATIEWE</sequence>